<proteinExistence type="inferred from homology"/>
<sequence>MATTADFKNGLVLVIDGQLWTIIGFQHVKPGKGPAFVRTKLKNVLSGKVVDKTYNAGVKVDTATVDRRDTTYLYRDGANFVFMDSQDYEQHPLPESLVGDTARFLLEGMSVQVAFHNGVPLYVELPVTVELEVTHTEPGLQGDRSSAGTKPATLETGAQINVPLFINTGDKLKVDSRDGSYLGRVNV</sequence>
<reference key="1">
    <citation type="journal article" date="2009" name="Nat. Genet.">
        <title>Comparative genomic and phylogeographic analysis of Mycobacterium leprae.</title>
        <authorList>
            <person name="Monot M."/>
            <person name="Honore N."/>
            <person name="Garnier T."/>
            <person name="Zidane N."/>
            <person name="Sherafi D."/>
            <person name="Paniz-Mondolfi A."/>
            <person name="Matsuoka M."/>
            <person name="Taylor G.M."/>
            <person name="Donoghue H.D."/>
            <person name="Bouwman A."/>
            <person name="Mays S."/>
            <person name="Watson C."/>
            <person name="Lockwood D."/>
            <person name="Khamispour A."/>
            <person name="Dowlati Y."/>
            <person name="Jianping S."/>
            <person name="Rea T.H."/>
            <person name="Vera-Cabrera L."/>
            <person name="Stefani M.M."/>
            <person name="Banu S."/>
            <person name="Macdonald M."/>
            <person name="Sapkota B.R."/>
            <person name="Spencer J.S."/>
            <person name="Thomas J."/>
            <person name="Harshman K."/>
            <person name="Singh P."/>
            <person name="Busso P."/>
            <person name="Gattiker A."/>
            <person name="Rougemont J."/>
            <person name="Brennan P.J."/>
            <person name="Cole S.T."/>
        </authorList>
    </citation>
    <scope>NUCLEOTIDE SEQUENCE [LARGE SCALE GENOMIC DNA]</scope>
    <source>
        <strain>Br4923</strain>
    </source>
</reference>
<name>EFP_MYCLB</name>
<dbReference type="EMBL" id="FM211192">
    <property type="protein sequence ID" value="CAR70615.1"/>
    <property type="molecule type" value="Genomic_DNA"/>
</dbReference>
<dbReference type="SMR" id="B8ZUK6"/>
<dbReference type="KEGG" id="mlb:MLBr00522"/>
<dbReference type="HOGENOM" id="CLU_074944_0_1_11"/>
<dbReference type="UniPathway" id="UPA00345"/>
<dbReference type="Proteomes" id="UP000006900">
    <property type="component" value="Chromosome"/>
</dbReference>
<dbReference type="GO" id="GO:0005737">
    <property type="term" value="C:cytoplasm"/>
    <property type="evidence" value="ECO:0007669"/>
    <property type="project" value="UniProtKB-SubCell"/>
</dbReference>
<dbReference type="GO" id="GO:0003746">
    <property type="term" value="F:translation elongation factor activity"/>
    <property type="evidence" value="ECO:0007669"/>
    <property type="project" value="UniProtKB-UniRule"/>
</dbReference>
<dbReference type="GO" id="GO:0043043">
    <property type="term" value="P:peptide biosynthetic process"/>
    <property type="evidence" value="ECO:0007669"/>
    <property type="project" value="InterPro"/>
</dbReference>
<dbReference type="CDD" id="cd04470">
    <property type="entry name" value="S1_EF-P_repeat_1"/>
    <property type="match status" value="1"/>
</dbReference>
<dbReference type="CDD" id="cd05794">
    <property type="entry name" value="S1_EF-P_repeat_2"/>
    <property type="match status" value="1"/>
</dbReference>
<dbReference type="FunFam" id="2.30.30.30:FF:000003">
    <property type="entry name" value="Elongation factor P"/>
    <property type="match status" value="1"/>
</dbReference>
<dbReference type="FunFam" id="2.40.50.140:FF:000004">
    <property type="entry name" value="Elongation factor P"/>
    <property type="match status" value="1"/>
</dbReference>
<dbReference type="FunFam" id="2.40.50.140:FF:000009">
    <property type="entry name" value="Elongation factor P"/>
    <property type="match status" value="1"/>
</dbReference>
<dbReference type="Gene3D" id="2.30.30.30">
    <property type="match status" value="1"/>
</dbReference>
<dbReference type="Gene3D" id="2.40.50.140">
    <property type="entry name" value="Nucleic acid-binding proteins"/>
    <property type="match status" value="2"/>
</dbReference>
<dbReference type="HAMAP" id="MF_00141">
    <property type="entry name" value="EF_P"/>
    <property type="match status" value="1"/>
</dbReference>
<dbReference type="InterPro" id="IPR015365">
    <property type="entry name" value="Elong-fact-P_C"/>
</dbReference>
<dbReference type="InterPro" id="IPR012340">
    <property type="entry name" value="NA-bd_OB-fold"/>
</dbReference>
<dbReference type="InterPro" id="IPR014722">
    <property type="entry name" value="Rib_uL2_dom2"/>
</dbReference>
<dbReference type="InterPro" id="IPR020599">
    <property type="entry name" value="Transl_elong_fac_P/YeiP"/>
</dbReference>
<dbReference type="InterPro" id="IPR013185">
    <property type="entry name" value="Transl_elong_KOW-like"/>
</dbReference>
<dbReference type="InterPro" id="IPR001059">
    <property type="entry name" value="Transl_elong_P/YeiP_cen"/>
</dbReference>
<dbReference type="InterPro" id="IPR013852">
    <property type="entry name" value="Transl_elong_P/YeiP_CS"/>
</dbReference>
<dbReference type="InterPro" id="IPR011768">
    <property type="entry name" value="Transl_elongation_fac_P"/>
</dbReference>
<dbReference type="InterPro" id="IPR008991">
    <property type="entry name" value="Translation_prot_SH3-like_sf"/>
</dbReference>
<dbReference type="NCBIfam" id="TIGR00038">
    <property type="entry name" value="efp"/>
    <property type="match status" value="1"/>
</dbReference>
<dbReference type="NCBIfam" id="NF001810">
    <property type="entry name" value="PRK00529.1"/>
    <property type="match status" value="1"/>
</dbReference>
<dbReference type="PANTHER" id="PTHR30053">
    <property type="entry name" value="ELONGATION FACTOR P"/>
    <property type="match status" value="1"/>
</dbReference>
<dbReference type="PANTHER" id="PTHR30053:SF12">
    <property type="entry name" value="ELONGATION FACTOR P (EF-P) FAMILY PROTEIN"/>
    <property type="match status" value="1"/>
</dbReference>
<dbReference type="Pfam" id="PF01132">
    <property type="entry name" value="EFP"/>
    <property type="match status" value="1"/>
</dbReference>
<dbReference type="Pfam" id="PF08207">
    <property type="entry name" value="EFP_N"/>
    <property type="match status" value="1"/>
</dbReference>
<dbReference type="Pfam" id="PF09285">
    <property type="entry name" value="Elong-fact-P_C"/>
    <property type="match status" value="1"/>
</dbReference>
<dbReference type="PIRSF" id="PIRSF005901">
    <property type="entry name" value="EF-P"/>
    <property type="match status" value="1"/>
</dbReference>
<dbReference type="SMART" id="SM01185">
    <property type="entry name" value="EFP"/>
    <property type="match status" value="1"/>
</dbReference>
<dbReference type="SMART" id="SM00841">
    <property type="entry name" value="Elong-fact-P_C"/>
    <property type="match status" value="1"/>
</dbReference>
<dbReference type="SUPFAM" id="SSF50249">
    <property type="entry name" value="Nucleic acid-binding proteins"/>
    <property type="match status" value="2"/>
</dbReference>
<dbReference type="SUPFAM" id="SSF50104">
    <property type="entry name" value="Translation proteins SH3-like domain"/>
    <property type="match status" value="1"/>
</dbReference>
<dbReference type="PROSITE" id="PS01275">
    <property type="entry name" value="EFP"/>
    <property type="match status" value="1"/>
</dbReference>
<comment type="function">
    <text evidence="1">Involved in peptide bond synthesis. Stimulates efficient translation and peptide-bond synthesis on native or reconstituted 70S ribosomes in vitro. Probably functions indirectly by altering the affinity of the ribosome for aminoacyl-tRNA, thus increasing their reactivity as acceptors for peptidyl transferase.</text>
</comment>
<comment type="pathway">
    <text evidence="1">Protein biosynthesis; polypeptide chain elongation.</text>
</comment>
<comment type="subcellular location">
    <subcellularLocation>
        <location evidence="1">Cytoplasm</location>
    </subcellularLocation>
</comment>
<comment type="similarity">
    <text evidence="1">Belongs to the elongation factor P family.</text>
</comment>
<organism>
    <name type="scientific">Mycobacterium leprae (strain Br4923)</name>
    <dbReference type="NCBI Taxonomy" id="561304"/>
    <lineage>
        <taxon>Bacteria</taxon>
        <taxon>Bacillati</taxon>
        <taxon>Actinomycetota</taxon>
        <taxon>Actinomycetes</taxon>
        <taxon>Mycobacteriales</taxon>
        <taxon>Mycobacteriaceae</taxon>
        <taxon>Mycobacterium</taxon>
    </lineage>
</organism>
<gene>
    <name evidence="1" type="primary">efp</name>
    <name type="ordered locus">MLBr00522</name>
</gene>
<protein>
    <recommendedName>
        <fullName evidence="1">Elongation factor P</fullName>
        <shortName evidence="1">EF-P</shortName>
    </recommendedName>
</protein>
<evidence type="ECO:0000255" key="1">
    <source>
        <dbReference type="HAMAP-Rule" id="MF_00141"/>
    </source>
</evidence>
<feature type="chain" id="PRO_1000123019" description="Elongation factor P">
    <location>
        <begin position="1"/>
        <end position="187"/>
    </location>
</feature>
<accession>B8ZUK6</accession>
<keyword id="KW-0963">Cytoplasm</keyword>
<keyword id="KW-0251">Elongation factor</keyword>
<keyword id="KW-0648">Protein biosynthesis</keyword>